<organism evidence="8">
    <name type="scientific">Caenorhabditis elegans</name>
    <dbReference type="NCBI Taxonomy" id="6239"/>
    <lineage>
        <taxon>Eukaryota</taxon>
        <taxon>Metazoa</taxon>
        <taxon>Ecdysozoa</taxon>
        <taxon>Nematoda</taxon>
        <taxon>Chromadorea</taxon>
        <taxon>Rhabditida</taxon>
        <taxon>Rhabditina</taxon>
        <taxon>Rhabditomorpha</taxon>
        <taxon>Rhabditoidea</taxon>
        <taxon>Rhabditidae</taxon>
        <taxon>Peloderinae</taxon>
        <taxon>Caenorhabditis</taxon>
    </lineage>
</organism>
<name>CDK17_CAEEL</name>
<evidence type="ECO:0000250" key="1">
    <source>
        <dbReference type="UniProtKB" id="P24941"/>
    </source>
</evidence>
<evidence type="ECO:0000255" key="2">
    <source>
        <dbReference type="PROSITE-ProRule" id="PRU00159"/>
    </source>
</evidence>
<evidence type="ECO:0000256" key="3">
    <source>
        <dbReference type="SAM" id="MobiDB-lite"/>
    </source>
</evidence>
<evidence type="ECO:0000269" key="4">
    <source>
    </source>
</evidence>
<evidence type="ECO:0000305" key="5"/>
<evidence type="ECO:0000305" key="6">
    <source>
    </source>
</evidence>
<evidence type="ECO:0000312" key="7">
    <source>
        <dbReference type="EMBL" id="AAD37120.1"/>
    </source>
</evidence>
<evidence type="ECO:0000312" key="8">
    <source>
        <dbReference type="Proteomes" id="UP000001940"/>
    </source>
</evidence>
<evidence type="ECO:0000312" key="9">
    <source>
        <dbReference type="WormBase" id="C07G1.3a"/>
    </source>
</evidence>
<evidence type="ECO:0000312" key="10">
    <source>
        <dbReference type="WormBase" id="C07G1.3c"/>
    </source>
</evidence>
<dbReference type="EC" id="2.7.11.22" evidence="4"/>
<dbReference type="EMBL" id="AF129110">
    <property type="protein sequence ID" value="AAD37120.1"/>
    <property type="molecule type" value="mRNA"/>
</dbReference>
<dbReference type="EMBL" id="FO080125">
    <property type="protein sequence ID" value="CCD61393.1"/>
    <property type="molecule type" value="Genomic_DNA"/>
</dbReference>
<dbReference type="EMBL" id="FO080125">
    <property type="protein sequence ID" value="CCD61395.1"/>
    <property type="molecule type" value="Genomic_DNA"/>
</dbReference>
<dbReference type="PIR" id="T15445">
    <property type="entry name" value="T15445"/>
</dbReference>
<dbReference type="RefSeq" id="NP_001021312.1">
    <property type="nucleotide sequence ID" value="NM_001026141.3"/>
</dbReference>
<dbReference type="RefSeq" id="NP_001379548.1">
    <molecule id="Q8I7M8-1"/>
    <property type="nucleotide sequence ID" value="NM_001392344.1"/>
</dbReference>
<dbReference type="RefSeq" id="NP_501372.1">
    <molecule id="Q8I7M8-2"/>
    <property type="nucleotide sequence ID" value="NM_068971.8"/>
</dbReference>
<dbReference type="SMR" id="Q8I7M8"/>
<dbReference type="ComplexPortal" id="CPX-4962">
    <property type="entry name" value="CyclinY-CDK17 complex"/>
</dbReference>
<dbReference type="FunCoup" id="Q8I7M8">
    <property type="interactions" value="1197"/>
</dbReference>
<dbReference type="IntAct" id="Q8I7M8">
    <property type="interactions" value="2"/>
</dbReference>
<dbReference type="STRING" id="6239.C07G1.3c.2"/>
<dbReference type="PaxDb" id="6239-C07G1.3b"/>
<dbReference type="EnsemblMetazoa" id="C07G1.3a.1">
    <molecule id="Q8I7M8-2"/>
    <property type="protein sequence ID" value="C07G1.3a.1"/>
    <property type="gene ID" value="WBGene00003961"/>
</dbReference>
<dbReference type="EnsemblMetazoa" id="C07G1.3a.2">
    <molecule id="Q8I7M8-2"/>
    <property type="protein sequence ID" value="C07G1.3a.2"/>
    <property type="gene ID" value="WBGene00003961"/>
</dbReference>
<dbReference type="EnsemblMetazoa" id="C07G1.3c.1">
    <molecule id="Q8I7M8-1"/>
    <property type="protein sequence ID" value="C07G1.3c.1"/>
    <property type="gene ID" value="WBGene00003961"/>
</dbReference>
<dbReference type="GeneID" id="177615"/>
<dbReference type="KEGG" id="cel:CELE_C07G1.3"/>
<dbReference type="UCSC" id="C07G1.3a.1">
    <molecule id="Q8I7M8-1"/>
    <property type="organism name" value="c. elegans"/>
</dbReference>
<dbReference type="AGR" id="WB:WBGene00003961"/>
<dbReference type="CTD" id="177615"/>
<dbReference type="WormBase" id="C07G1.3a">
    <molecule id="Q8I7M8-2"/>
    <property type="protein sequence ID" value="CE06779"/>
    <property type="gene ID" value="WBGene00003961"/>
    <property type="gene designation" value="pct-1"/>
</dbReference>
<dbReference type="WormBase" id="C07G1.3c">
    <molecule id="Q8I7M8-1"/>
    <property type="protein sequence ID" value="CE32571"/>
    <property type="gene ID" value="WBGene00003961"/>
    <property type="gene designation" value="pct-1"/>
</dbReference>
<dbReference type="eggNOG" id="KOG0594">
    <property type="taxonomic scope" value="Eukaryota"/>
</dbReference>
<dbReference type="GeneTree" id="ENSGT00940000156963"/>
<dbReference type="HOGENOM" id="CLU_000288_154_1_1"/>
<dbReference type="InParanoid" id="Q8I7M8"/>
<dbReference type="OMA" id="DDVGWER"/>
<dbReference type="OrthoDB" id="1732493at2759"/>
<dbReference type="PRO" id="PR:Q8I7M8"/>
<dbReference type="Proteomes" id="UP000001940">
    <property type="component" value="Chromosome IV"/>
</dbReference>
<dbReference type="Bgee" id="WBGene00003961">
    <property type="expression patterns" value="Expressed in pharyngeal muscle cell (C elegans) and 4 other cell types or tissues"/>
</dbReference>
<dbReference type="GO" id="GO:0030424">
    <property type="term" value="C:axon"/>
    <property type="evidence" value="ECO:0000314"/>
    <property type="project" value="WormBase"/>
</dbReference>
<dbReference type="GO" id="GO:1904115">
    <property type="term" value="C:axon cytoplasm"/>
    <property type="evidence" value="ECO:0007669"/>
    <property type="project" value="GOC"/>
</dbReference>
<dbReference type="GO" id="GO:0000307">
    <property type="term" value="C:cyclin-dependent protein kinase holoenzyme complex"/>
    <property type="evidence" value="ECO:0000353"/>
    <property type="project" value="ComplexPortal"/>
</dbReference>
<dbReference type="GO" id="GO:0005737">
    <property type="term" value="C:cytoplasm"/>
    <property type="evidence" value="ECO:0000318"/>
    <property type="project" value="GO_Central"/>
</dbReference>
<dbReference type="GO" id="GO:0030425">
    <property type="term" value="C:dendrite"/>
    <property type="evidence" value="ECO:0000314"/>
    <property type="project" value="WormBase"/>
</dbReference>
<dbReference type="GO" id="GO:0005634">
    <property type="term" value="C:nucleus"/>
    <property type="evidence" value="ECO:0000318"/>
    <property type="project" value="GO_Central"/>
</dbReference>
<dbReference type="GO" id="GO:0005524">
    <property type="term" value="F:ATP binding"/>
    <property type="evidence" value="ECO:0007669"/>
    <property type="project" value="UniProtKB-KW"/>
</dbReference>
<dbReference type="GO" id="GO:0004693">
    <property type="term" value="F:cyclin-dependent protein serine/threonine kinase activity"/>
    <property type="evidence" value="ECO:0000318"/>
    <property type="project" value="GO_Central"/>
</dbReference>
<dbReference type="GO" id="GO:0046872">
    <property type="term" value="F:metal ion binding"/>
    <property type="evidence" value="ECO:0007669"/>
    <property type="project" value="UniProtKB-KW"/>
</dbReference>
<dbReference type="GO" id="GO:0106310">
    <property type="term" value="F:protein serine kinase activity"/>
    <property type="evidence" value="ECO:0007669"/>
    <property type="project" value="RHEA"/>
</dbReference>
<dbReference type="GO" id="GO:0008089">
    <property type="term" value="P:anterograde axonal transport"/>
    <property type="evidence" value="ECO:0000303"/>
    <property type="project" value="ComplexPortal"/>
</dbReference>
<dbReference type="GO" id="GO:1901987">
    <property type="term" value="P:regulation of cell cycle phase transition"/>
    <property type="evidence" value="ECO:0000318"/>
    <property type="project" value="GO_Central"/>
</dbReference>
<dbReference type="GO" id="GO:0048489">
    <property type="term" value="P:synaptic vesicle transport"/>
    <property type="evidence" value="ECO:0000303"/>
    <property type="project" value="ComplexPortal"/>
</dbReference>
<dbReference type="CDD" id="cd07844">
    <property type="entry name" value="STKc_PCTAIRE_like"/>
    <property type="match status" value="1"/>
</dbReference>
<dbReference type="FunFam" id="3.30.200.20:FF:000007">
    <property type="entry name" value="Cyclin-dependent kinase 14, putative"/>
    <property type="match status" value="1"/>
</dbReference>
<dbReference type="FunFam" id="1.10.510.10:FF:000993">
    <property type="entry name" value="Cyclin-dependent kinase 17"/>
    <property type="match status" value="1"/>
</dbReference>
<dbReference type="Gene3D" id="3.30.200.20">
    <property type="entry name" value="Phosphorylase Kinase, domain 1"/>
    <property type="match status" value="1"/>
</dbReference>
<dbReference type="Gene3D" id="1.10.510.10">
    <property type="entry name" value="Transferase(Phosphotransferase) domain 1"/>
    <property type="match status" value="1"/>
</dbReference>
<dbReference type="InterPro" id="IPR050108">
    <property type="entry name" value="CDK"/>
</dbReference>
<dbReference type="InterPro" id="IPR011009">
    <property type="entry name" value="Kinase-like_dom_sf"/>
</dbReference>
<dbReference type="InterPro" id="IPR000719">
    <property type="entry name" value="Prot_kinase_dom"/>
</dbReference>
<dbReference type="InterPro" id="IPR017441">
    <property type="entry name" value="Protein_kinase_ATP_BS"/>
</dbReference>
<dbReference type="InterPro" id="IPR008271">
    <property type="entry name" value="Ser/Thr_kinase_AS"/>
</dbReference>
<dbReference type="PANTHER" id="PTHR24056">
    <property type="entry name" value="CELL DIVISION PROTEIN KINASE"/>
    <property type="match status" value="1"/>
</dbReference>
<dbReference type="PANTHER" id="PTHR24056:SF246">
    <property type="entry name" value="ECDYSONE-INDUCED PROTEIN 63E, ISOFORM N"/>
    <property type="match status" value="1"/>
</dbReference>
<dbReference type="Pfam" id="PF00069">
    <property type="entry name" value="Pkinase"/>
    <property type="match status" value="1"/>
</dbReference>
<dbReference type="SMART" id="SM00220">
    <property type="entry name" value="S_TKc"/>
    <property type="match status" value="1"/>
</dbReference>
<dbReference type="SUPFAM" id="SSF56112">
    <property type="entry name" value="Protein kinase-like (PK-like)"/>
    <property type="match status" value="1"/>
</dbReference>
<dbReference type="PROSITE" id="PS00107">
    <property type="entry name" value="PROTEIN_KINASE_ATP"/>
    <property type="match status" value="1"/>
</dbReference>
<dbReference type="PROSITE" id="PS50011">
    <property type="entry name" value="PROTEIN_KINASE_DOM"/>
    <property type="match status" value="1"/>
</dbReference>
<dbReference type="PROSITE" id="PS00108">
    <property type="entry name" value="PROTEIN_KINASE_ST"/>
    <property type="match status" value="1"/>
</dbReference>
<keyword id="KW-0025">Alternative splicing</keyword>
<keyword id="KW-0067">ATP-binding</keyword>
<keyword id="KW-0966">Cell projection</keyword>
<keyword id="KW-0963">Cytoplasm</keyword>
<keyword id="KW-0418">Kinase</keyword>
<keyword id="KW-0460">Magnesium</keyword>
<keyword id="KW-0479">Metal-binding</keyword>
<keyword id="KW-0547">Nucleotide-binding</keyword>
<keyword id="KW-1185">Reference proteome</keyword>
<keyword id="KW-0723">Serine/threonine-protein kinase</keyword>
<keyword id="KW-0808">Transferase</keyword>
<protein>
    <recommendedName>
        <fullName evidence="5">Cyclin-dependent kinase 17</fullName>
        <ecNumber evidence="4">2.7.11.22</ecNumber>
    </recommendedName>
    <alternativeName>
        <fullName evidence="5">Cell division protein kinase 17</fullName>
    </alternativeName>
    <alternativeName>
        <fullName evidence="6">PCTAIRE-motif protein kinase</fullName>
    </alternativeName>
</protein>
<proteinExistence type="evidence at protein level"/>
<feature type="chain" id="PRO_0000433390" description="Cyclin-dependent kinase 17" evidence="5">
    <location>
        <begin position="1"/>
        <end position="667"/>
    </location>
</feature>
<feature type="domain" description="Protein kinase" evidence="2">
    <location>
        <begin position="328"/>
        <end position="609"/>
    </location>
</feature>
<feature type="region of interest" description="Disordered" evidence="3">
    <location>
        <begin position="1"/>
        <end position="70"/>
    </location>
</feature>
<feature type="region of interest" description="Disordered" evidence="3">
    <location>
        <begin position="85"/>
        <end position="184"/>
    </location>
</feature>
<feature type="region of interest" description="Disordered" evidence="3">
    <location>
        <begin position="642"/>
        <end position="667"/>
    </location>
</feature>
<feature type="compositionally biased region" description="Acidic residues" evidence="3">
    <location>
        <begin position="99"/>
        <end position="111"/>
    </location>
</feature>
<feature type="compositionally biased region" description="Acidic residues" evidence="3">
    <location>
        <begin position="119"/>
        <end position="144"/>
    </location>
</feature>
<feature type="compositionally biased region" description="Polar residues" evidence="3">
    <location>
        <begin position="151"/>
        <end position="164"/>
    </location>
</feature>
<feature type="compositionally biased region" description="Basic residues" evidence="3">
    <location>
        <begin position="644"/>
        <end position="653"/>
    </location>
</feature>
<feature type="active site" description="Proton acceptor" evidence="2">
    <location>
        <position position="449"/>
    </location>
</feature>
<feature type="binding site" evidence="2">
    <location>
        <begin position="334"/>
        <end position="342"/>
    </location>
    <ligand>
        <name>ATP</name>
        <dbReference type="ChEBI" id="CHEBI:30616"/>
    </ligand>
</feature>
<feature type="binding site" evidence="2">
    <location>
        <position position="357"/>
    </location>
    <ligand>
        <name>ATP</name>
        <dbReference type="ChEBI" id="CHEBI:30616"/>
    </ligand>
</feature>
<feature type="binding site" evidence="1">
    <location>
        <position position="454"/>
    </location>
    <ligand>
        <name>Mg(2+)</name>
        <dbReference type="ChEBI" id="CHEBI:18420"/>
    </ligand>
</feature>
<feature type="binding site" evidence="1">
    <location>
        <position position="467"/>
    </location>
    <ligand>
        <name>Mg(2+)</name>
        <dbReference type="ChEBI" id="CHEBI:18420"/>
    </ligand>
</feature>
<feature type="splice variant" id="VSP_057763" description="In isoform a." evidence="5">
    <original>MTAYSPADSNAEARLLSGGSDPISDTENLLDLAYEVGTSSSDNTRYDRESENDEEEIGVGWEDTTSSSLNKRMCKSATFHDFCDDSEYSRRPVTTLHEEDFDEEEEDEFEDASDRRNLDEDDVEYEDEDDEDDIVVEEEEITPEDIEHSPTGVTTQTTPPSNNTSKSKKKKKRKSDEEDGLRKMKKSSTFASFLNMFVSRRRSGRDSGERLMSRSTCMLRPSISL</original>
    <variation>MKKLKRRLSAAFRPGSNNNVSITSSGGSYYDSDCEGRNNIVIGYGMMSAPLHGRTWTLSESMSHLSDKNGAILEECAVVDPTALLRVSRGGTAGRRYDTNVNYINGMHVPPPRTHSLYYPRGYNSRRNSYYGSNA</variation>
    <location>
        <begin position="1"/>
        <end position="225"/>
    </location>
</feature>
<feature type="mutagenesis site" description="In wy575; abnormal localization of several synaptic vesicle components and active zone proteins in the cell body and in the dendrite of DA9 motor neuron. No other phenotype except a slightly smaller progeny size." evidence="4">
    <original>D</original>
    <variation>N</variation>
    <location>
        <position position="467"/>
    </location>
</feature>
<sequence length="667" mass="76153">MTAYSPADSNAEARLLSGGSDPISDTENLLDLAYEVGTSSSDNTRYDRESENDEEEIGVGWEDTTSSSLNKRMCKSATFHDFCDDSEYSRRPVTTLHEEDFDEEEEDEFEDASDRRNLDEDDVEYEDEDDEDDIVVEEEEITPEDIEHSPTGVTTQTTPPSNNTSKSKKKKKRKSDEEDGLRKMKKSSTFASFLNMFVSRRRSGRDSGERLMSRSTCMLRPSISLSVVQESMILGSDGESVEVSPCTSDQTPTGVPPRYIVNVKMRQKTARKWSEEEIQKRLSLPADLRLPVAVVDKLNRTPTLDQPLTRKNRRASLSEIGFGKLETYEKLDKLGEGTYATVFRGRSILTNKFVALKEIRLEQEEGAPCTAIREVSLLRNLRHANVVTLHDIIHTDRLLTLVFEYVDRDLKQYMDSCNNAMQMNNIRLFLYQLLRGLAYCHQRRVLHRDLKPQNLLITAKGELKLADFGLARAKSVPTKTYSNEVVTLWYRPPDVLLGSTDYSTHIDMWGVGCILFEMIAGRALFPGGTPTEQLGLIFRTLGSPRPDRHPTICEKPTFYPYANRHYNPDPLCRQIPRIDAHGFELLMKFLQYEGKDRVSAAEAVKHPFLRTIAVKCCHLRDEQSVLEADGIHIERELLASDHHHSSRRHHRGTLVKDKYRMHSSHHT</sequence>
<reference evidence="7" key="1">
    <citation type="journal article" date="1999" name="Development">
        <title>The Caenorhabditis elegans gene ncc-1 encodes a cdc2-related kinase required for M phase in meiotic and mitotic cell divisions, but not for S phase.</title>
        <authorList>
            <person name="Boxem M."/>
            <person name="Srinivasan D.G."/>
            <person name="van den Heuvel S."/>
        </authorList>
    </citation>
    <scope>NUCLEOTIDE SEQUENCE [MRNA] (ISOFORM A)</scope>
    <source>
        <strain evidence="7">Bristol N2</strain>
    </source>
</reference>
<reference evidence="8" key="2">
    <citation type="journal article" date="1998" name="Science">
        <title>Genome sequence of the nematode C. elegans: a platform for investigating biology.</title>
        <authorList>
            <consortium name="The C. elegans sequencing consortium"/>
        </authorList>
    </citation>
    <scope>NUCLEOTIDE SEQUENCE [LARGE SCALE GENOMIC DNA]</scope>
    <source>
        <strain evidence="8">Bristol N2</strain>
    </source>
</reference>
<reference evidence="5" key="3">
    <citation type="journal article" date="2010" name="Cell">
        <title>Two cyclin-dependent kinase pathways are essential for polarized trafficking of presynaptic components.</title>
        <authorList>
            <person name="Ou C.Y."/>
            <person name="Poon V.Y."/>
            <person name="Maeder C.I."/>
            <person name="Watanabe S."/>
            <person name="Lehrman E.K."/>
            <person name="Fu A.K."/>
            <person name="Park M."/>
            <person name="Fu W.Y."/>
            <person name="Jorgensen E.M."/>
            <person name="Ip N.Y."/>
            <person name="Shen K."/>
        </authorList>
    </citation>
    <scope>FUNCTION</scope>
    <scope>CATALYTIC ACTIVITY</scope>
    <scope>COFACTOR</scope>
    <scope>INTERACTION WITH CYY-1</scope>
    <scope>SUBCELLULAR LOCATION</scope>
    <scope>MUTAGENESIS OF ASP-467</scope>
</reference>
<gene>
    <name evidence="10" type="primary">pct-1</name>
    <name evidence="10" type="ORF">C07G1.3</name>
</gene>
<comment type="function">
    <text evidence="4">Serine/threonine-protein kinase, which, in association with cyy-1, regulates the trafficking of synaptic vesicles in the DA9 motor neuron and probably also in the DD motor neurons and in RIA interneurons.</text>
</comment>
<comment type="function">
    <molecule>Isoform c</molecule>
    <text evidence="4">Sufficient for synaptic vesicle trafficking in the DA9 motor neuron.</text>
</comment>
<comment type="catalytic activity">
    <reaction evidence="4">
        <text>L-seryl-[protein] + ATP = O-phospho-L-seryl-[protein] + ADP + H(+)</text>
        <dbReference type="Rhea" id="RHEA:17989"/>
        <dbReference type="Rhea" id="RHEA-COMP:9863"/>
        <dbReference type="Rhea" id="RHEA-COMP:11604"/>
        <dbReference type="ChEBI" id="CHEBI:15378"/>
        <dbReference type="ChEBI" id="CHEBI:29999"/>
        <dbReference type="ChEBI" id="CHEBI:30616"/>
        <dbReference type="ChEBI" id="CHEBI:83421"/>
        <dbReference type="ChEBI" id="CHEBI:456216"/>
        <dbReference type="EC" id="2.7.11.22"/>
    </reaction>
</comment>
<comment type="catalytic activity">
    <reaction evidence="4">
        <text>L-threonyl-[protein] + ATP = O-phospho-L-threonyl-[protein] + ADP + H(+)</text>
        <dbReference type="Rhea" id="RHEA:46608"/>
        <dbReference type="Rhea" id="RHEA-COMP:11060"/>
        <dbReference type="Rhea" id="RHEA-COMP:11605"/>
        <dbReference type="ChEBI" id="CHEBI:15378"/>
        <dbReference type="ChEBI" id="CHEBI:30013"/>
        <dbReference type="ChEBI" id="CHEBI:30616"/>
        <dbReference type="ChEBI" id="CHEBI:61977"/>
        <dbReference type="ChEBI" id="CHEBI:456216"/>
        <dbReference type="EC" id="2.7.11.22"/>
    </reaction>
</comment>
<comment type="cofactor">
    <cofactor evidence="4">
        <name>Mg(2+)</name>
        <dbReference type="ChEBI" id="CHEBI:18420"/>
    </cofactor>
    <text evidence="1">Binds 2 Mg(2+) ions.</text>
</comment>
<comment type="subunit">
    <text evidence="4">Interacts with cyy-1; the interaction is required to activate pct-1.</text>
</comment>
<comment type="interaction">
    <interactant intactId="EBI-2918577">
        <id>Q8I7M8</id>
    </interactant>
    <interactant intactId="EBI-2696495">
        <id>P34624</id>
        <label>cyy-1</label>
    </interactant>
    <organismsDiffer>false</organismsDiffer>
    <experiments>2</experiments>
</comment>
<comment type="subcellular location">
    <subcellularLocation>
        <location evidence="4">Cytoplasm</location>
    </subcellularLocation>
    <subcellularLocation>
        <location evidence="4">Cell projection</location>
        <location evidence="4">Dendrite</location>
    </subcellularLocation>
    <subcellularLocation>
        <location evidence="4">Cell projection</location>
        <location evidence="4">Axon</location>
    </subcellularLocation>
    <text evidence="4">Evenly distributed in the dendrite, the axon and the cell body of the DA motor neuron.</text>
</comment>
<comment type="alternative products">
    <event type="alternative splicing"/>
    <isoform>
        <id>Q8I7M8-1</id>
        <name evidence="9">c</name>
        <sequence type="displayed"/>
    </isoform>
    <isoform>
        <id>Q8I7M8-2</id>
        <name evidence="10">a</name>
        <sequence type="described" ref="VSP_057763"/>
    </isoform>
</comment>
<comment type="similarity">
    <text evidence="5">Belongs to the protein kinase superfamily. CMGC Ser/Thr protein kinase family. CDC2/CDKX subfamily.</text>
</comment>
<accession>Q8I7M8</accession>
<accession>G5EDS3</accession>